<proteinExistence type="inferred from homology"/>
<name>MECA_STAAC</name>
<comment type="function">
    <text evidence="1">Enables the recognition and targeting of unfolded and aggregated proteins to the ClpC protease or to other proteins involved in proteolysis.</text>
</comment>
<comment type="subunit">
    <text evidence="1">Homodimer.</text>
</comment>
<comment type="domain">
    <text>The N-terminal domain probably binds unfolded/aggregated proteins; the C-terminal domain interacts with ClpC.</text>
</comment>
<comment type="similarity">
    <text evidence="1">Belongs to the MecA family.</text>
</comment>
<organism>
    <name type="scientific">Staphylococcus aureus (strain COL)</name>
    <dbReference type="NCBI Taxonomy" id="93062"/>
    <lineage>
        <taxon>Bacteria</taxon>
        <taxon>Bacillati</taxon>
        <taxon>Bacillota</taxon>
        <taxon>Bacilli</taxon>
        <taxon>Bacillales</taxon>
        <taxon>Staphylococcaceae</taxon>
        <taxon>Staphylococcus</taxon>
    </lineage>
</organism>
<evidence type="ECO:0000255" key="1">
    <source>
        <dbReference type="HAMAP-Rule" id="MF_01124"/>
    </source>
</evidence>
<evidence type="ECO:0000256" key="2">
    <source>
        <dbReference type="SAM" id="MobiDB-lite"/>
    </source>
</evidence>
<accession>Q5HH86</accession>
<feature type="chain" id="PRO_0000212276" description="Adapter protein MecA">
    <location>
        <begin position="1"/>
        <end position="239"/>
    </location>
</feature>
<feature type="region of interest" description="Disordered" evidence="2">
    <location>
        <begin position="118"/>
        <end position="137"/>
    </location>
</feature>
<feature type="compositionally biased region" description="Basic and acidic residues" evidence="2">
    <location>
        <begin position="118"/>
        <end position="128"/>
    </location>
</feature>
<reference key="1">
    <citation type="journal article" date="2005" name="J. Bacteriol.">
        <title>Insights on evolution of virulence and resistance from the complete genome analysis of an early methicillin-resistant Staphylococcus aureus strain and a biofilm-producing methicillin-resistant Staphylococcus epidermidis strain.</title>
        <authorList>
            <person name="Gill S.R."/>
            <person name="Fouts D.E."/>
            <person name="Archer G.L."/>
            <person name="Mongodin E.F."/>
            <person name="DeBoy R.T."/>
            <person name="Ravel J."/>
            <person name="Paulsen I.T."/>
            <person name="Kolonay J.F."/>
            <person name="Brinkac L.M."/>
            <person name="Beanan M.J."/>
            <person name="Dodson R.J."/>
            <person name="Daugherty S.C."/>
            <person name="Madupu R."/>
            <person name="Angiuoli S.V."/>
            <person name="Durkin A.S."/>
            <person name="Haft D.H."/>
            <person name="Vamathevan J.J."/>
            <person name="Khouri H."/>
            <person name="Utterback T.R."/>
            <person name="Lee C."/>
            <person name="Dimitrov G."/>
            <person name="Jiang L."/>
            <person name="Qin H."/>
            <person name="Weidman J."/>
            <person name="Tran K."/>
            <person name="Kang K.H."/>
            <person name="Hance I.R."/>
            <person name="Nelson K.E."/>
            <person name="Fraser C.M."/>
        </authorList>
    </citation>
    <scope>NUCLEOTIDE SEQUENCE [LARGE SCALE GENOMIC DNA]</scope>
    <source>
        <strain>COL</strain>
    </source>
</reference>
<dbReference type="EMBL" id="CP000046">
    <property type="protein sequence ID" value="AAW36471.1"/>
    <property type="molecule type" value="Genomic_DNA"/>
</dbReference>
<dbReference type="RefSeq" id="WP_001217722.1">
    <property type="nucleotide sequence ID" value="NC_002951.2"/>
</dbReference>
<dbReference type="SMR" id="Q5HH86"/>
<dbReference type="KEGG" id="sac:SACOL1003"/>
<dbReference type="HOGENOM" id="CLU_071496_2_1_9"/>
<dbReference type="Proteomes" id="UP000000530">
    <property type="component" value="Chromosome"/>
</dbReference>
<dbReference type="GO" id="GO:0030674">
    <property type="term" value="F:protein-macromolecule adaptor activity"/>
    <property type="evidence" value="ECO:0007669"/>
    <property type="project" value="UniProtKB-UniRule"/>
</dbReference>
<dbReference type="Gene3D" id="3.30.70.1950">
    <property type="match status" value="1"/>
</dbReference>
<dbReference type="HAMAP" id="MF_01124">
    <property type="entry name" value="MecA"/>
    <property type="match status" value="1"/>
</dbReference>
<dbReference type="InterPro" id="IPR038471">
    <property type="entry name" value="MecA_C_sf"/>
</dbReference>
<dbReference type="InterPro" id="IPR008681">
    <property type="entry name" value="Neg-reg_MecA"/>
</dbReference>
<dbReference type="NCBIfam" id="NF002642">
    <property type="entry name" value="PRK02315.1-3"/>
    <property type="match status" value="1"/>
</dbReference>
<dbReference type="NCBIfam" id="NF002644">
    <property type="entry name" value="PRK02315.1-5"/>
    <property type="match status" value="1"/>
</dbReference>
<dbReference type="PANTHER" id="PTHR39161">
    <property type="entry name" value="ADAPTER PROTEIN MECA"/>
    <property type="match status" value="1"/>
</dbReference>
<dbReference type="PANTHER" id="PTHR39161:SF1">
    <property type="entry name" value="ADAPTER PROTEIN MECA 1"/>
    <property type="match status" value="1"/>
</dbReference>
<dbReference type="Pfam" id="PF05389">
    <property type="entry name" value="MecA"/>
    <property type="match status" value="1"/>
</dbReference>
<dbReference type="PIRSF" id="PIRSF029008">
    <property type="entry name" value="MecA"/>
    <property type="match status" value="1"/>
</dbReference>
<sequence>MRIERVDDTTVKLFITYSDIEARGFSREDLWTNRKRGEEFFWSMMDEINEEEDFVVEGPLWIQVHAFDKGVEVTISKSKNEDMMNMSDDDATDQFDEQVQELLAQTLEGEDQLEELFEQRTKEKEAQGSKRQKSSARKNTRTIIVKFNDLEDVINYAYHSNPITTEFEDLLYMVDGTYYYAVYFDSHVDQEVINDSYSQLLEFAYPTDRTEVYLNDYAKIIMSHNVTAQVRRYFPETTE</sequence>
<protein>
    <recommendedName>
        <fullName evidence="1">Adapter protein MecA</fullName>
    </recommendedName>
</protein>
<gene>
    <name evidence="1" type="primary">mecA</name>
    <name type="ordered locus">SACOL1003</name>
</gene>